<evidence type="ECO:0000269" key="1">
    <source>
    </source>
</evidence>
<evidence type="ECO:0000269" key="2">
    <source>
    </source>
</evidence>
<evidence type="ECO:0000305" key="3"/>
<name>ULA1_DROME</name>
<dbReference type="EMBL" id="AE014296">
    <property type="protein sequence ID" value="AAF50102.1"/>
    <property type="molecule type" value="Genomic_DNA"/>
</dbReference>
<dbReference type="EMBL" id="BT001291">
    <property type="protein sequence ID" value="AAN71047.1"/>
    <property type="molecule type" value="mRNA"/>
</dbReference>
<dbReference type="EMBL" id="BT050569">
    <property type="protein sequence ID" value="ACJ23453.1"/>
    <property type="molecule type" value="mRNA"/>
</dbReference>
<dbReference type="RefSeq" id="NP_001261699.1">
    <property type="nucleotide sequence ID" value="NM_001274770.1"/>
</dbReference>
<dbReference type="RefSeq" id="NP_648435.1">
    <property type="nucleotide sequence ID" value="NM_140178.4"/>
</dbReference>
<dbReference type="SMR" id="Q9VTE9"/>
<dbReference type="BioGRID" id="64618">
    <property type="interactions" value="6"/>
</dbReference>
<dbReference type="DIP" id="DIP-21214N"/>
<dbReference type="FunCoup" id="Q9VTE9">
    <property type="interactions" value="2146"/>
</dbReference>
<dbReference type="IntAct" id="Q9VTE9">
    <property type="interactions" value="6"/>
</dbReference>
<dbReference type="STRING" id="7227.FBpp0075938"/>
<dbReference type="PaxDb" id="7227-FBpp0075938"/>
<dbReference type="DNASU" id="39244"/>
<dbReference type="EnsemblMetazoa" id="FBtr0076208">
    <property type="protein sequence ID" value="FBpp0075938"/>
    <property type="gene ID" value="FBgn0261112"/>
</dbReference>
<dbReference type="EnsemblMetazoa" id="FBtr0331179">
    <property type="protein sequence ID" value="FBpp0303606"/>
    <property type="gene ID" value="FBgn0261112"/>
</dbReference>
<dbReference type="GeneID" id="39244"/>
<dbReference type="KEGG" id="dme:Dmel_CG7828"/>
<dbReference type="UCSC" id="CG7828-RA">
    <property type="organism name" value="d. melanogaster"/>
</dbReference>
<dbReference type="AGR" id="FB:FBgn0261112"/>
<dbReference type="CTD" id="39244"/>
<dbReference type="FlyBase" id="FBgn0261112">
    <property type="gene designation" value="APP-BP1"/>
</dbReference>
<dbReference type="VEuPathDB" id="VectorBase:FBgn0261112"/>
<dbReference type="eggNOG" id="KOG2016">
    <property type="taxonomic scope" value="Eukaryota"/>
</dbReference>
<dbReference type="GeneTree" id="ENSGT00550000074901"/>
<dbReference type="HOGENOM" id="CLU_019618_2_1_1"/>
<dbReference type="InParanoid" id="Q9VTE9"/>
<dbReference type="OMA" id="KLITHQY"/>
<dbReference type="OrthoDB" id="1708823at2759"/>
<dbReference type="PhylomeDB" id="Q9VTE9"/>
<dbReference type="Reactome" id="R-DME-8951664">
    <property type="pathway name" value="Neddylation"/>
</dbReference>
<dbReference type="SignaLink" id="Q9VTE9"/>
<dbReference type="UniPathway" id="UPA00885"/>
<dbReference type="BioGRID-ORCS" id="39244">
    <property type="hits" value="1 hit in 3 CRISPR screens"/>
</dbReference>
<dbReference type="GenomeRNAi" id="39244"/>
<dbReference type="PRO" id="PR:Q9VTE9"/>
<dbReference type="Proteomes" id="UP000000803">
    <property type="component" value="Chromosome 3L"/>
</dbReference>
<dbReference type="Bgee" id="FBgn0261112">
    <property type="expression patterns" value="Expressed in testis and 91 other cell types or tissues"/>
</dbReference>
<dbReference type="ExpressionAtlas" id="Q9VTE9">
    <property type="expression patterns" value="baseline and differential"/>
</dbReference>
<dbReference type="GO" id="GO:0120500">
    <property type="term" value="C:NAE1-UBA3 complex"/>
    <property type="evidence" value="ECO:0000353"/>
    <property type="project" value="FlyBase"/>
</dbReference>
<dbReference type="GO" id="GO:0001540">
    <property type="term" value="F:amyloid-beta binding"/>
    <property type="evidence" value="ECO:0000353"/>
    <property type="project" value="UniProtKB"/>
</dbReference>
<dbReference type="GO" id="GO:0019781">
    <property type="term" value="F:NEDD8 activating enzyme activity"/>
    <property type="evidence" value="ECO:0007669"/>
    <property type="project" value="InterPro"/>
</dbReference>
<dbReference type="GO" id="GO:0046982">
    <property type="term" value="F:protein heterodimerization activity"/>
    <property type="evidence" value="ECO:0000250"/>
    <property type="project" value="UniProtKB"/>
</dbReference>
<dbReference type="GO" id="GO:0045116">
    <property type="term" value="P:protein neddylation"/>
    <property type="evidence" value="ECO:0000314"/>
    <property type="project" value="FlyBase"/>
</dbReference>
<dbReference type="CDD" id="cd01493">
    <property type="entry name" value="APPBP1_RUB"/>
    <property type="match status" value="1"/>
</dbReference>
<dbReference type="FunFam" id="3.40.50.720:FF:000263">
    <property type="entry name" value="NEDD8-activating enzyme E1 regulatory subunit"/>
    <property type="match status" value="1"/>
</dbReference>
<dbReference type="FunFam" id="3.40.50.720:FF:000828">
    <property type="entry name" value="Nedd8-activating enzyme E1 regulatory subunit"/>
    <property type="match status" value="1"/>
</dbReference>
<dbReference type="Gene3D" id="3.40.50.720">
    <property type="entry name" value="NAD(P)-binding Rossmann-like Domain"/>
    <property type="match status" value="2"/>
</dbReference>
<dbReference type="InterPro" id="IPR030667">
    <property type="entry name" value="APP-BP1"/>
</dbReference>
<dbReference type="InterPro" id="IPR045886">
    <property type="entry name" value="ThiF/MoeB/HesA"/>
</dbReference>
<dbReference type="InterPro" id="IPR000594">
    <property type="entry name" value="ThiF_NAD_FAD-bd"/>
</dbReference>
<dbReference type="InterPro" id="IPR035985">
    <property type="entry name" value="Ubiquitin-activating_enz"/>
</dbReference>
<dbReference type="PANTHER" id="PTHR10953:SF29">
    <property type="entry name" value="NEDD8-ACTIVATING ENZYME E1 REGULATORY SUBUNIT"/>
    <property type="match status" value="1"/>
</dbReference>
<dbReference type="PANTHER" id="PTHR10953">
    <property type="entry name" value="UBIQUITIN-ACTIVATING ENZYME E1"/>
    <property type="match status" value="1"/>
</dbReference>
<dbReference type="Pfam" id="PF00899">
    <property type="entry name" value="ThiF"/>
    <property type="match status" value="1"/>
</dbReference>
<dbReference type="PIRSF" id="PIRSF039099">
    <property type="entry name" value="APP-BP1"/>
    <property type="match status" value="1"/>
</dbReference>
<dbReference type="SUPFAM" id="SSF69572">
    <property type="entry name" value="Activating enzymes of the ubiquitin-like proteins"/>
    <property type="match status" value="1"/>
</dbReference>
<proteinExistence type="evidence at protein level"/>
<accession>Q9VTE9</accession>
<accession>B6IDX9</accession>
<accession>Q8IHE1</accession>
<sequence length="524" mass="58717">MSSPAPKSPELSDKSKKYDRQIRLWGEHGQTLLEAATVCLVNVTAVGCETAKGLVLPGIGGFTVADGSTVKEEDLGNNFFLDSSYLGKSKALACMQLLQELNPDVNGDYVDESADFLLANRPNFFDSFDLVIASNLNEQTLLLLAERLWELNVPLIYCRSLGMLGTIRLQIREHCIVEAHPDNRQFDLRLEHPFDALREHLDGTEVTSKVPWLLVLHKYLNVWQKQQADGTQTPRNYKEKNQLKETIREEMKADEENYEEAIKAVNTAFGAGQVPKSLKAIFEDDACEQLNKKSNVFWIMAKALKHFVIHENEGHLPLPGVLPDMTANTDSYIALQHIYRQQALQDADQVYHKCQEYLKQLALPADSIDERSVRLICKEAAGLAVIRGTRIAEEYEKSSRLLPLVEDNELQGNLTAYNFALRAYERFLSECGNIPGECIVEQDIGRLKSIAAKMLSDLGMHATISDDVLHEICRYGGAELHAVSAFIGGCAAQEVIKIITKQYKPIDNTFIYNAITTESVTLKL</sequence>
<gene>
    <name type="primary">APP-BP1</name>
    <name type="ORF">CG7828</name>
</gene>
<protein>
    <recommendedName>
        <fullName>Nedd8-activating enzyme E1 regulatory subunit</fullName>
    </recommendedName>
    <alternativeName>
        <fullName>Beta-amyloid precursor binding protein 1</fullName>
        <shortName>dAPP-BP1</shortName>
    </alternativeName>
</protein>
<comment type="function">
    <text evidence="1 2">Regulatory subunit of the dimeric Uba3-APP-BP1 E1 enzyme. E1 activates Nedd8 by first adenylating its C-terminal glycine residue with ATP, thereafter linking this residue to the side chain of the catalytic cysteine, yielding a Nedd8-Uba3 thioester and free AMP. E1 finally transfers Nedd8 to the catalytic cysteine of UbcE2M. Required for Cul1 and Cul3 neddylation. Appl and APP-BP1 interact antagonistically during development.</text>
</comment>
<comment type="pathway">
    <text>Protein modification; protein neddylation.</text>
</comment>
<comment type="subunit">
    <text evidence="1 2">Heterodimer of Uba3 and APP-BP1. The complex binds Nedd8 and UbcE2M. Interacts with Appl (via the intracellular domain, ICD).</text>
</comment>
<comment type="developmental stage">
    <text evidence="1">Expressed throughout development.</text>
</comment>
<comment type="disruption phenotype">
    <text evidence="1">Hinders tissue development, causes apoptosis in imaginal disk cells, and blocks the Nedd8 conjugation pathway.</text>
</comment>
<comment type="similarity">
    <text evidence="3">Belongs to the ubiquitin-activating E1 family. ULA1 subfamily.</text>
</comment>
<keyword id="KW-1185">Reference proteome</keyword>
<keyword id="KW-0833">Ubl conjugation pathway</keyword>
<feature type="chain" id="PRO_0000194958" description="Nedd8-activating enzyme E1 regulatory subunit">
    <location>
        <begin position="1"/>
        <end position="524"/>
    </location>
</feature>
<feature type="sequence conflict" description="In Ref. 3; AAN71047." evidence="3" ref="3">
    <original>H</original>
    <variation>N</variation>
    <location>
        <position position="306"/>
    </location>
</feature>
<reference key="1">
    <citation type="journal article" date="2000" name="Science">
        <title>The genome sequence of Drosophila melanogaster.</title>
        <authorList>
            <person name="Adams M.D."/>
            <person name="Celniker S.E."/>
            <person name="Holt R.A."/>
            <person name="Evans C.A."/>
            <person name="Gocayne J.D."/>
            <person name="Amanatides P.G."/>
            <person name="Scherer S.E."/>
            <person name="Li P.W."/>
            <person name="Hoskins R.A."/>
            <person name="Galle R.F."/>
            <person name="George R.A."/>
            <person name="Lewis S.E."/>
            <person name="Richards S."/>
            <person name="Ashburner M."/>
            <person name="Henderson S.N."/>
            <person name="Sutton G.G."/>
            <person name="Wortman J.R."/>
            <person name="Yandell M.D."/>
            <person name="Zhang Q."/>
            <person name="Chen L.X."/>
            <person name="Brandon R.C."/>
            <person name="Rogers Y.-H.C."/>
            <person name="Blazej R.G."/>
            <person name="Champe M."/>
            <person name="Pfeiffer B.D."/>
            <person name="Wan K.H."/>
            <person name="Doyle C."/>
            <person name="Baxter E.G."/>
            <person name="Helt G."/>
            <person name="Nelson C.R."/>
            <person name="Miklos G.L.G."/>
            <person name="Abril J.F."/>
            <person name="Agbayani A."/>
            <person name="An H.-J."/>
            <person name="Andrews-Pfannkoch C."/>
            <person name="Baldwin D."/>
            <person name="Ballew R.M."/>
            <person name="Basu A."/>
            <person name="Baxendale J."/>
            <person name="Bayraktaroglu L."/>
            <person name="Beasley E.M."/>
            <person name="Beeson K.Y."/>
            <person name="Benos P.V."/>
            <person name="Berman B.P."/>
            <person name="Bhandari D."/>
            <person name="Bolshakov S."/>
            <person name="Borkova D."/>
            <person name="Botchan M.R."/>
            <person name="Bouck J."/>
            <person name="Brokstein P."/>
            <person name="Brottier P."/>
            <person name="Burtis K.C."/>
            <person name="Busam D.A."/>
            <person name="Butler H."/>
            <person name="Cadieu E."/>
            <person name="Center A."/>
            <person name="Chandra I."/>
            <person name="Cherry J.M."/>
            <person name="Cawley S."/>
            <person name="Dahlke C."/>
            <person name="Davenport L.B."/>
            <person name="Davies P."/>
            <person name="de Pablos B."/>
            <person name="Delcher A."/>
            <person name="Deng Z."/>
            <person name="Mays A.D."/>
            <person name="Dew I."/>
            <person name="Dietz S.M."/>
            <person name="Dodson K."/>
            <person name="Doup L.E."/>
            <person name="Downes M."/>
            <person name="Dugan-Rocha S."/>
            <person name="Dunkov B.C."/>
            <person name="Dunn P."/>
            <person name="Durbin K.J."/>
            <person name="Evangelista C.C."/>
            <person name="Ferraz C."/>
            <person name="Ferriera S."/>
            <person name="Fleischmann W."/>
            <person name="Fosler C."/>
            <person name="Gabrielian A.E."/>
            <person name="Garg N.S."/>
            <person name="Gelbart W.M."/>
            <person name="Glasser K."/>
            <person name="Glodek A."/>
            <person name="Gong F."/>
            <person name="Gorrell J.H."/>
            <person name="Gu Z."/>
            <person name="Guan P."/>
            <person name="Harris M."/>
            <person name="Harris N.L."/>
            <person name="Harvey D.A."/>
            <person name="Heiman T.J."/>
            <person name="Hernandez J.R."/>
            <person name="Houck J."/>
            <person name="Hostin D."/>
            <person name="Houston K.A."/>
            <person name="Howland T.J."/>
            <person name="Wei M.-H."/>
            <person name="Ibegwam C."/>
            <person name="Jalali M."/>
            <person name="Kalush F."/>
            <person name="Karpen G.H."/>
            <person name="Ke Z."/>
            <person name="Kennison J.A."/>
            <person name="Ketchum K.A."/>
            <person name="Kimmel B.E."/>
            <person name="Kodira C.D."/>
            <person name="Kraft C.L."/>
            <person name="Kravitz S."/>
            <person name="Kulp D."/>
            <person name="Lai Z."/>
            <person name="Lasko P."/>
            <person name="Lei Y."/>
            <person name="Levitsky A.A."/>
            <person name="Li J.H."/>
            <person name="Li Z."/>
            <person name="Liang Y."/>
            <person name="Lin X."/>
            <person name="Liu X."/>
            <person name="Mattei B."/>
            <person name="McIntosh T.C."/>
            <person name="McLeod M.P."/>
            <person name="McPherson D."/>
            <person name="Merkulov G."/>
            <person name="Milshina N.V."/>
            <person name="Mobarry C."/>
            <person name="Morris J."/>
            <person name="Moshrefi A."/>
            <person name="Mount S.M."/>
            <person name="Moy M."/>
            <person name="Murphy B."/>
            <person name="Murphy L."/>
            <person name="Muzny D.M."/>
            <person name="Nelson D.L."/>
            <person name="Nelson D.R."/>
            <person name="Nelson K.A."/>
            <person name="Nixon K."/>
            <person name="Nusskern D.R."/>
            <person name="Pacleb J.M."/>
            <person name="Palazzolo M."/>
            <person name="Pittman G.S."/>
            <person name="Pan S."/>
            <person name="Pollard J."/>
            <person name="Puri V."/>
            <person name="Reese M.G."/>
            <person name="Reinert K."/>
            <person name="Remington K."/>
            <person name="Saunders R.D.C."/>
            <person name="Scheeler F."/>
            <person name="Shen H."/>
            <person name="Shue B.C."/>
            <person name="Siden-Kiamos I."/>
            <person name="Simpson M."/>
            <person name="Skupski M.P."/>
            <person name="Smith T.J."/>
            <person name="Spier E."/>
            <person name="Spradling A.C."/>
            <person name="Stapleton M."/>
            <person name="Strong R."/>
            <person name="Sun E."/>
            <person name="Svirskas R."/>
            <person name="Tector C."/>
            <person name="Turner R."/>
            <person name="Venter E."/>
            <person name="Wang A.H."/>
            <person name="Wang X."/>
            <person name="Wang Z.-Y."/>
            <person name="Wassarman D.A."/>
            <person name="Weinstock G.M."/>
            <person name="Weissenbach J."/>
            <person name="Williams S.M."/>
            <person name="Woodage T."/>
            <person name="Worley K.C."/>
            <person name="Wu D."/>
            <person name="Yang S."/>
            <person name="Yao Q.A."/>
            <person name="Ye J."/>
            <person name="Yeh R.-F."/>
            <person name="Zaveri J.S."/>
            <person name="Zhan M."/>
            <person name="Zhang G."/>
            <person name="Zhao Q."/>
            <person name="Zheng L."/>
            <person name="Zheng X.H."/>
            <person name="Zhong F.N."/>
            <person name="Zhong W."/>
            <person name="Zhou X."/>
            <person name="Zhu S.C."/>
            <person name="Zhu X."/>
            <person name="Smith H.O."/>
            <person name="Gibbs R.A."/>
            <person name="Myers E.W."/>
            <person name="Rubin G.M."/>
            <person name="Venter J.C."/>
        </authorList>
    </citation>
    <scope>NUCLEOTIDE SEQUENCE [LARGE SCALE GENOMIC DNA]</scope>
    <source>
        <strain>Berkeley</strain>
    </source>
</reference>
<reference key="2">
    <citation type="journal article" date="2002" name="Genome Biol.">
        <title>Annotation of the Drosophila melanogaster euchromatic genome: a systematic review.</title>
        <authorList>
            <person name="Misra S."/>
            <person name="Crosby M.A."/>
            <person name="Mungall C.J."/>
            <person name="Matthews B.B."/>
            <person name="Campbell K.S."/>
            <person name="Hradecky P."/>
            <person name="Huang Y."/>
            <person name="Kaminker J.S."/>
            <person name="Millburn G.H."/>
            <person name="Prochnik S.E."/>
            <person name="Smith C.D."/>
            <person name="Tupy J.L."/>
            <person name="Whitfield E.J."/>
            <person name="Bayraktaroglu L."/>
            <person name="Berman B.P."/>
            <person name="Bettencourt B.R."/>
            <person name="Celniker S.E."/>
            <person name="de Grey A.D.N.J."/>
            <person name="Drysdale R.A."/>
            <person name="Harris N.L."/>
            <person name="Richter J."/>
            <person name="Russo S."/>
            <person name="Schroeder A.J."/>
            <person name="Shu S.Q."/>
            <person name="Stapleton M."/>
            <person name="Yamada C."/>
            <person name="Ashburner M."/>
            <person name="Gelbart W.M."/>
            <person name="Rubin G.M."/>
            <person name="Lewis S.E."/>
        </authorList>
    </citation>
    <scope>GENOME REANNOTATION</scope>
    <source>
        <strain>Berkeley</strain>
    </source>
</reference>
<reference key="3">
    <citation type="journal article" date="2002" name="Genome Biol.">
        <title>A Drosophila full-length cDNA resource.</title>
        <authorList>
            <person name="Stapleton M."/>
            <person name="Carlson J.W."/>
            <person name="Brokstein P."/>
            <person name="Yu C."/>
            <person name="Champe M."/>
            <person name="George R.A."/>
            <person name="Guarin H."/>
            <person name="Kronmiller B."/>
            <person name="Pacleb J.M."/>
            <person name="Park S."/>
            <person name="Wan K.H."/>
            <person name="Rubin G.M."/>
            <person name="Celniker S.E."/>
        </authorList>
    </citation>
    <scope>NUCLEOTIDE SEQUENCE [LARGE SCALE MRNA]</scope>
    <source>
        <strain>Berkeley</strain>
        <tissue>Testis</tissue>
    </source>
</reference>
<reference key="4">
    <citation type="submission" date="2008-11" db="EMBL/GenBank/DDBJ databases">
        <authorList>
            <person name="Carlson J.W."/>
            <person name="Booth B."/>
            <person name="Frise E."/>
            <person name="Park S."/>
            <person name="Wan K.H."/>
            <person name="Yu C."/>
            <person name="Celniker S.E."/>
        </authorList>
    </citation>
    <scope>NUCLEOTIDE SEQUENCE [LARGE SCALE MRNA]</scope>
    <source>
        <strain>Berkeley</strain>
    </source>
</reference>
<reference key="5">
    <citation type="journal article" date="2007" name="Cell Death Differ.">
        <title>Drosophila homolog of APP-BP1 (dAPP-BP1) interacts antagonistically with APPL during Drosophila development.</title>
        <authorList>
            <person name="Kim H.J."/>
            <person name="Kim S.H."/>
            <person name="Shim S.O."/>
            <person name="Park E."/>
            <person name="Kim C."/>
            <person name="Kim K."/>
            <person name="Tanouye M.A."/>
            <person name="Yim J."/>
        </authorList>
    </citation>
    <scope>FUNCTION</scope>
    <scope>INTERACTION WITH APPL</scope>
    <scope>DEVELOPMENTAL STAGE</scope>
    <scope>DISRUPTION PHENOTYPE</scope>
</reference>
<reference key="6">
    <citation type="journal article" date="2011" name="PLoS ONE">
        <title>In vivo RNAi screen reveals neddylation genes as novel regulators of Hedgehog signaling.</title>
        <authorList>
            <person name="Du J."/>
            <person name="Zhang J."/>
            <person name="Su Y."/>
            <person name="Liu M."/>
            <person name="Ospina J.K."/>
            <person name="Yang S."/>
            <person name="Zhu A.J."/>
        </authorList>
    </citation>
    <scope>FUNCTION</scope>
    <scope>INTERACTION WITH UBA3</scope>
</reference>
<organism>
    <name type="scientific">Drosophila melanogaster</name>
    <name type="common">Fruit fly</name>
    <dbReference type="NCBI Taxonomy" id="7227"/>
    <lineage>
        <taxon>Eukaryota</taxon>
        <taxon>Metazoa</taxon>
        <taxon>Ecdysozoa</taxon>
        <taxon>Arthropoda</taxon>
        <taxon>Hexapoda</taxon>
        <taxon>Insecta</taxon>
        <taxon>Pterygota</taxon>
        <taxon>Neoptera</taxon>
        <taxon>Endopterygota</taxon>
        <taxon>Diptera</taxon>
        <taxon>Brachycera</taxon>
        <taxon>Muscomorpha</taxon>
        <taxon>Ephydroidea</taxon>
        <taxon>Drosophilidae</taxon>
        <taxon>Drosophila</taxon>
        <taxon>Sophophora</taxon>
    </lineage>
</organism>